<organism>
    <name type="scientific">Desulfotalea psychrophila (strain LSv54 / DSM 12343)</name>
    <dbReference type="NCBI Taxonomy" id="177439"/>
    <lineage>
        <taxon>Bacteria</taxon>
        <taxon>Pseudomonadati</taxon>
        <taxon>Thermodesulfobacteriota</taxon>
        <taxon>Desulfobulbia</taxon>
        <taxon>Desulfobulbales</taxon>
        <taxon>Desulfocapsaceae</taxon>
        <taxon>Desulfotalea</taxon>
    </lineage>
</organism>
<name>TAL_DESPS</name>
<sequence length="214" mass="22890">MKFFIDTANLDEIREGVELGLVDGVTTNPSLIARENLPFEELIAEICKIVDGPVSAEVISLDAPGMVAEAKKLASIDEKVVIKVPMTAEGLKAVRQLSAAGIKTNVTLIFSANQALLAAKAGASYVSPFVGRLDDIGVNSADLISDILTIFDNYGYASEVIVASVRGPQHVLDSALLGADIATIPLKTIKQLTKHPLTDKGMEQFLADWEKRTQ</sequence>
<reference key="1">
    <citation type="journal article" date="2004" name="Environ. Microbiol.">
        <title>The genome of Desulfotalea psychrophila, a sulfate-reducing bacterium from permanently cold Arctic sediments.</title>
        <authorList>
            <person name="Rabus R."/>
            <person name="Ruepp A."/>
            <person name="Frickey T."/>
            <person name="Rattei T."/>
            <person name="Fartmann B."/>
            <person name="Stark M."/>
            <person name="Bauer M."/>
            <person name="Zibat A."/>
            <person name="Lombardot T."/>
            <person name="Becker I."/>
            <person name="Amann J."/>
            <person name="Gellner K."/>
            <person name="Teeling H."/>
            <person name="Leuschner W.D."/>
            <person name="Gloeckner F.-O."/>
            <person name="Lupas A.N."/>
            <person name="Amann R."/>
            <person name="Klenk H.-P."/>
        </authorList>
    </citation>
    <scope>NUCLEOTIDE SEQUENCE [LARGE SCALE GENOMIC DNA]</scope>
    <source>
        <strain>DSM 12343 / LSv54</strain>
    </source>
</reference>
<proteinExistence type="inferred from homology"/>
<protein>
    <recommendedName>
        <fullName evidence="1">Probable transaldolase</fullName>
        <ecNumber evidence="1">2.2.1.2</ecNumber>
    </recommendedName>
</protein>
<evidence type="ECO:0000255" key="1">
    <source>
        <dbReference type="HAMAP-Rule" id="MF_00494"/>
    </source>
</evidence>
<feature type="chain" id="PRO_1000126310" description="Probable transaldolase">
    <location>
        <begin position="1"/>
        <end position="214"/>
    </location>
</feature>
<feature type="active site" description="Schiff-base intermediate with substrate" evidence="1">
    <location>
        <position position="83"/>
    </location>
</feature>
<keyword id="KW-0963">Cytoplasm</keyword>
<keyword id="KW-0570">Pentose shunt</keyword>
<keyword id="KW-1185">Reference proteome</keyword>
<keyword id="KW-0704">Schiff base</keyword>
<keyword id="KW-0808">Transferase</keyword>
<accession>Q6AR67</accession>
<dbReference type="EC" id="2.2.1.2" evidence="1"/>
<dbReference type="EMBL" id="CR522870">
    <property type="protein sequence ID" value="CAG35157.1"/>
    <property type="molecule type" value="Genomic_DNA"/>
</dbReference>
<dbReference type="RefSeq" id="WP_011187673.1">
    <property type="nucleotide sequence ID" value="NC_006138.1"/>
</dbReference>
<dbReference type="SMR" id="Q6AR67"/>
<dbReference type="STRING" id="177439.DP0428"/>
<dbReference type="KEGG" id="dps:DP0428"/>
<dbReference type="eggNOG" id="COG0176">
    <property type="taxonomic scope" value="Bacteria"/>
</dbReference>
<dbReference type="HOGENOM" id="CLU_079764_0_0_7"/>
<dbReference type="OrthoDB" id="9807051at2"/>
<dbReference type="UniPathway" id="UPA00115">
    <property type="reaction ID" value="UER00414"/>
</dbReference>
<dbReference type="Proteomes" id="UP000000602">
    <property type="component" value="Chromosome"/>
</dbReference>
<dbReference type="GO" id="GO:0005737">
    <property type="term" value="C:cytoplasm"/>
    <property type="evidence" value="ECO:0007669"/>
    <property type="project" value="UniProtKB-SubCell"/>
</dbReference>
<dbReference type="GO" id="GO:0016832">
    <property type="term" value="F:aldehyde-lyase activity"/>
    <property type="evidence" value="ECO:0007669"/>
    <property type="project" value="InterPro"/>
</dbReference>
<dbReference type="GO" id="GO:0004801">
    <property type="term" value="F:transaldolase activity"/>
    <property type="evidence" value="ECO:0007669"/>
    <property type="project" value="UniProtKB-UniRule"/>
</dbReference>
<dbReference type="GO" id="GO:0005975">
    <property type="term" value="P:carbohydrate metabolic process"/>
    <property type="evidence" value="ECO:0007669"/>
    <property type="project" value="InterPro"/>
</dbReference>
<dbReference type="GO" id="GO:0006098">
    <property type="term" value="P:pentose-phosphate shunt"/>
    <property type="evidence" value="ECO:0007669"/>
    <property type="project" value="UniProtKB-UniRule"/>
</dbReference>
<dbReference type="CDD" id="cd00956">
    <property type="entry name" value="Transaldolase_FSA"/>
    <property type="match status" value="1"/>
</dbReference>
<dbReference type="FunFam" id="3.20.20.70:FF:000018">
    <property type="entry name" value="Probable transaldolase"/>
    <property type="match status" value="1"/>
</dbReference>
<dbReference type="Gene3D" id="3.20.20.70">
    <property type="entry name" value="Aldolase class I"/>
    <property type="match status" value="1"/>
</dbReference>
<dbReference type="HAMAP" id="MF_00494">
    <property type="entry name" value="Transaldolase_3b"/>
    <property type="match status" value="1"/>
</dbReference>
<dbReference type="InterPro" id="IPR013785">
    <property type="entry name" value="Aldolase_TIM"/>
</dbReference>
<dbReference type="InterPro" id="IPR001585">
    <property type="entry name" value="TAL/FSA"/>
</dbReference>
<dbReference type="InterPro" id="IPR022999">
    <property type="entry name" value="Transaldolase_3B"/>
</dbReference>
<dbReference type="InterPro" id="IPR004731">
    <property type="entry name" value="Transaldolase_3B/F6P_aldolase"/>
</dbReference>
<dbReference type="InterPro" id="IPR018225">
    <property type="entry name" value="Transaldolase_AS"/>
</dbReference>
<dbReference type="InterPro" id="IPR033919">
    <property type="entry name" value="TSA/FSA_arc/bac"/>
</dbReference>
<dbReference type="NCBIfam" id="TIGR00875">
    <property type="entry name" value="fsa_talC_mipB"/>
    <property type="match status" value="1"/>
</dbReference>
<dbReference type="PANTHER" id="PTHR10683:SF40">
    <property type="entry name" value="FRUCTOSE-6-PHOSPHATE ALDOLASE 1-RELATED"/>
    <property type="match status" value="1"/>
</dbReference>
<dbReference type="PANTHER" id="PTHR10683">
    <property type="entry name" value="TRANSALDOLASE"/>
    <property type="match status" value="1"/>
</dbReference>
<dbReference type="Pfam" id="PF00923">
    <property type="entry name" value="TAL_FSA"/>
    <property type="match status" value="1"/>
</dbReference>
<dbReference type="SUPFAM" id="SSF51569">
    <property type="entry name" value="Aldolase"/>
    <property type="match status" value="1"/>
</dbReference>
<dbReference type="PROSITE" id="PS01054">
    <property type="entry name" value="TRANSALDOLASE_1"/>
    <property type="match status" value="1"/>
</dbReference>
<dbReference type="PROSITE" id="PS00958">
    <property type="entry name" value="TRANSALDOLASE_2"/>
    <property type="match status" value="1"/>
</dbReference>
<comment type="function">
    <text evidence="1">Transaldolase is important for the balance of metabolites in the pentose-phosphate pathway.</text>
</comment>
<comment type="catalytic activity">
    <reaction evidence="1">
        <text>D-sedoheptulose 7-phosphate + D-glyceraldehyde 3-phosphate = D-erythrose 4-phosphate + beta-D-fructose 6-phosphate</text>
        <dbReference type="Rhea" id="RHEA:17053"/>
        <dbReference type="ChEBI" id="CHEBI:16897"/>
        <dbReference type="ChEBI" id="CHEBI:57483"/>
        <dbReference type="ChEBI" id="CHEBI:57634"/>
        <dbReference type="ChEBI" id="CHEBI:59776"/>
        <dbReference type="EC" id="2.2.1.2"/>
    </reaction>
</comment>
<comment type="pathway">
    <text evidence="1">Carbohydrate degradation; pentose phosphate pathway; D-glyceraldehyde 3-phosphate and beta-D-fructose 6-phosphate from D-ribose 5-phosphate and D-xylulose 5-phosphate (non-oxidative stage): step 2/3.</text>
</comment>
<comment type="subcellular location">
    <subcellularLocation>
        <location evidence="1">Cytoplasm</location>
    </subcellularLocation>
</comment>
<comment type="similarity">
    <text evidence="1">Belongs to the transaldolase family. Type 3B subfamily.</text>
</comment>
<gene>
    <name evidence="1" type="primary">tal</name>
    <name type="ordered locus">DP0428</name>
</gene>